<dbReference type="EMBL" id="DQ464902">
    <property type="protein sequence ID" value="ABE97925.1"/>
    <property type="molecule type" value="mRNA"/>
</dbReference>
<dbReference type="EMBL" id="AK057954">
    <property type="protein sequence ID" value="BAB71622.1"/>
    <property type="status" value="ALT_INIT"/>
    <property type="molecule type" value="mRNA"/>
</dbReference>
<dbReference type="EMBL" id="AK298565">
    <property type="protein sequence ID" value="BAG60759.1"/>
    <property type="molecule type" value="mRNA"/>
</dbReference>
<dbReference type="EMBL" id="AC096948">
    <property type="status" value="NOT_ANNOTATED_CDS"/>
    <property type="molecule type" value="Genomic_DNA"/>
</dbReference>
<dbReference type="EMBL" id="AC138392">
    <property type="status" value="NOT_ANNOTATED_CDS"/>
    <property type="molecule type" value="Genomic_DNA"/>
</dbReference>
<dbReference type="EMBL" id="BC055084">
    <property type="protein sequence ID" value="AAH55084.1"/>
    <property type="status" value="ALT_SEQ"/>
    <property type="molecule type" value="mRNA"/>
</dbReference>
<dbReference type="EMBL" id="BC017827">
    <property type="protein sequence ID" value="AAH17827.1"/>
    <property type="status" value="ALT_SEQ"/>
    <property type="molecule type" value="mRNA"/>
</dbReference>
<dbReference type="EMBL" id="BC111395">
    <property type="protein sequence ID" value="AAI11396.1"/>
    <property type="status" value="ALT_INIT"/>
    <property type="molecule type" value="mRNA"/>
</dbReference>
<dbReference type="EMBL" id="BC114444">
    <property type="protein sequence ID" value="AAI14445.1"/>
    <property type="status" value="ALT_INIT"/>
    <property type="molecule type" value="mRNA"/>
</dbReference>
<dbReference type="EMBL" id="BC114445">
    <property type="protein sequence ID" value="AAI14446.1"/>
    <property type="status" value="ALT_INIT"/>
    <property type="molecule type" value="mRNA"/>
</dbReference>
<dbReference type="EMBL" id="AF114264">
    <property type="protein sequence ID" value="AAD29607.1"/>
    <property type="molecule type" value="mRNA"/>
</dbReference>
<dbReference type="EMBL" id="S67069">
    <property type="protein sequence ID" value="AAB28815.1"/>
    <property type="molecule type" value="mRNA"/>
</dbReference>
<dbReference type="CCDS" id="CCDS41351.1">
    <molecule id="Q0ZGT2-1"/>
</dbReference>
<dbReference type="CCDS" id="CCDS53335.1">
    <molecule id="Q0ZGT2-4"/>
</dbReference>
<dbReference type="RefSeq" id="NP_001165780.1">
    <molecule id="Q0ZGT2-4"/>
    <property type="nucleotide sequence ID" value="NM_001172309.2"/>
</dbReference>
<dbReference type="RefSeq" id="NP_653174.3">
    <molecule id="Q0ZGT2-1"/>
    <property type="nucleotide sequence ID" value="NM_144573.4"/>
</dbReference>
<dbReference type="RefSeq" id="XP_005271380.1">
    <molecule id="Q0ZGT2-2"/>
    <property type="nucleotide sequence ID" value="XM_005271323.5"/>
</dbReference>
<dbReference type="RefSeq" id="XP_054195568.1">
    <molecule id="Q0ZGT2-2"/>
    <property type="nucleotide sequence ID" value="XM_054339593.1"/>
</dbReference>
<dbReference type="SMR" id="Q0ZGT2"/>
<dbReference type="BioGRID" id="124855">
    <property type="interactions" value="104"/>
</dbReference>
<dbReference type="FunCoup" id="Q0ZGT2">
    <property type="interactions" value="530"/>
</dbReference>
<dbReference type="IntAct" id="Q0ZGT2">
    <property type="interactions" value="77"/>
</dbReference>
<dbReference type="MINT" id="Q0ZGT2"/>
<dbReference type="STRING" id="9606.ENSP00000333938"/>
<dbReference type="GlyGen" id="Q0ZGT2">
    <property type="glycosylation" value="3 sites, 2 N-linked glycans (2 sites), 1 O-linked glycan (1 site)"/>
</dbReference>
<dbReference type="iPTMnet" id="Q0ZGT2"/>
<dbReference type="MetOSite" id="Q0ZGT2"/>
<dbReference type="PhosphoSitePlus" id="Q0ZGT2"/>
<dbReference type="SwissPalm" id="Q0ZGT2"/>
<dbReference type="BioMuta" id="NEXN"/>
<dbReference type="DMDM" id="121945484"/>
<dbReference type="jPOST" id="Q0ZGT2"/>
<dbReference type="MassIVE" id="Q0ZGT2"/>
<dbReference type="PaxDb" id="9606-ENSP00000333938"/>
<dbReference type="PeptideAtlas" id="Q0ZGT2"/>
<dbReference type="ProteomicsDB" id="58848">
    <molecule id="Q0ZGT2-1"/>
</dbReference>
<dbReference type="ProteomicsDB" id="58849">
    <molecule id="Q0ZGT2-2"/>
</dbReference>
<dbReference type="ProteomicsDB" id="58850">
    <molecule id="Q0ZGT2-3"/>
</dbReference>
<dbReference type="ProteomicsDB" id="58851">
    <molecule id="Q0ZGT2-4"/>
</dbReference>
<dbReference type="Pumba" id="Q0ZGT2"/>
<dbReference type="TopDownProteomics" id="Q0ZGT2-4">
    <molecule id="Q0ZGT2-4"/>
</dbReference>
<dbReference type="Antibodypedia" id="2776">
    <property type="antibodies" value="73 antibodies from 17 providers"/>
</dbReference>
<dbReference type="DNASU" id="91624"/>
<dbReference type="Ensembl" id="ENST00000330010.12">
    <molecule id="Q0ZGT2-4"/>
    <property type="protein sequence ID" value="ENSP00000327363.8"/>
    <property type="gene ID" value="ENSG00000162614.19"/>
</dbReference>
<dbReference type="Ensembl" id="ENST00000334785.12">
    <molecule id="Q0ZGT2-1"/>
    <property type="protein sequence ID" value="ENSP00000333938.7"/>
    <property type="gene ID" value="ENSG00000162614.19"/>
</dbReference>
<dbReference type="GeneID" id="91624"/>
<dbReference type="KEGG" id="hsa:91624"/>
<dbReference type="MANE-Select" id="ENST00000334785.12">
    <property type="protein sequence ID" value="ENSP00000333938.7"/>
    <property type="RefSeq nucleotide sequence ID" value="NM_144573.4"/>
    <property type="RefSeq protein sequence ID" value="NP_653174.3"/>
</dbReference>
<dbReference type="UCSC" id="uc001dib.5">
    <molecule id="Q0ZGT2-1"/>
    <property type="organism name" value="human"/>
</dbReference>
<dbReference type="AGR" id="HGNC:29557"/>
<dbReference type="CTD" id="91624"/>
<dbReference type="DisGeNET" id="91624"/>
<dbReference type="GeneCards" id="NEXN"/>
<dbReference type="GeneReviews" id="NEXN"/>
<dbReference type="HGNC" id="HGNC:29557">
    <property type="gene designation" value="NEXN"/>
</dbReference>
<dbReference type="HPA" id="ENSG00000162614">
    <property type="expression patterns" value="Group enriched (heart muscle, skeletal muscle, tongue)"/>
</dbReference>
<dbReference type="MalaCards" id="NEXN"/>
<dbReference type="MIM" id="613121">
    <property type="type" value="gene"/>
</dbReference>
<dbReference type="MIM" id="613122">
    <property type="type" value="phenotype"/>
</dbReference>
<dbReference type="MIM" id="613876">
    <property type="type" value="phenotype"/>
</dbReference>
<dbReference type="neXtProt" id="NX_Q0ZGT2"/>
<dbReference type="OpenTargets" id="ENSG00000162614"/>
<dbReference type="Orphanet" id="154">
    <property type="disease" value="Familial isolated dilated cardiomyopathy"/>
</dbReference>
<dbReference type="PharmGKB" id="PA134974801"/>
<dbReference type="VEuPathDB" id="HostDB:ENSG00000162614"/>
<dbReference type="eggNOG" id="ENOG502QU7W">
    <property type="taxonomic scope" value="Eukaryota"/>
</dbReference>
<dbReference type="GeneTree" id="ENSGT00730000111176"/>
<dbReference type="HOGENOM" id="CLU_023108_1_1_1"/>
<dbReference type="InParanoid" id="Q0ZGT2"/>
<dbReference type="OMA" id="NWTDKIE"/>
<dbReference type="OrthoDB" id="8946843at2759"/>
<dbReference type="PAN-GO" id="Q0ZGT2">
    <property type="GO annotations" value="6 GO annotations based on evolutionary models"/>
</dbReference>
<dbReference type="PhylomeDB" id="Q0ZGT2"/>
<dbReference type="TreeFam" id="TF328960"/>
<dbReference type="PathwayCommons" id="Q0ZGT2"/>
<dbReference type="SignaLink" id="Q0ZGT2"/>
<dbReference type="BioGRID-ORCS" id="91624">
    <property type="hits" value="12 hits in 1156 CRISPR screens"/>
</dbReference>
<dbReference type="CD-CODE" id="DEE660B4">
    <property type="entry name" value="Stress granule"/>
</dbReference>
<dbReference type="ChiTaRS" id="NEXN">
    <property type="organism name" value="human"/>
</dbReference>
<dbReference type="GenomeRNAi" id="91624"/>
<dbReference type="Pharos" id="Q0ZGT2">
    <property type="development level" value="Tbio"/>
</dbReference>
<dbReference type="PRO" id="PR:Q0ZGT2"/>
<dbReference type="Proteomes" id="UP000005640">
    <property type="component" value="Chromosome 1"/>
</dbReference>
<dbReference type="RNAct" id="Q0ZGT2">
    <property type="molecule type" value="protein"/>
</dbReference>
<dbReference type="Bgee" id="ENSG00000162614">
    <property type="expression patterns" value="Expressed in left ventricle myocardium and 159 other cell types or tissues"/>
</dbReference>
<dbReference type="ExpressionAtlas" id="Q0ZGT2">
    <property type="expression patterns" value="baseline and differential"/>
</dbReference>
<dbReference type="GO" id="GO:0015629">
    <property type="term" value="C:actin cytoskeleton"/>
    <property type="evidence" value="ECO:0000314"/>
    <property type="project" value="HPA"/>
</dbReference>
<dbReference type="GO" id="GO:0005912">
    <property type="term" value="C:adherens junction"/>
    <property type="evidence" value="ECO:0007669"/>
    <property type="project" value="UniProtKB-SubCell"/>
</dbReference>
<dbReference type="GO" id="GO:0030424">
    <property type="term" value="C:axon"/>
    <property type="evidence" value="ECO:0000318"/>
    <property type="project" value="GO_Central"/>
</dbReference>
<dbReference type="GO" id="GO:0005925">
    <property type="term" value="C:focal adhesion"/>
    <property type="evidence" value="ECO:0007005"/>
    <property type="project" value="UniProtKB"/>
</dbReference>
<dbReference type="GO" id="GO:0005886">
    <property type="term" value="C:plasma membrane"/>
    <property type="evidence" value="ECO:0000314"/>
    <property type="project" value="HPA"/>
</dbReference>
<dbReference type="GO" id="GO:0030018">
    <property type="term" value="C:Z disc"/>
    <property type="evidence" value="ECO:0000250"/>
    <property type="project" value="UniProtKB"/>
</dbReference>
<dbReference type="GO" id="GO:0051015">
    <property type="term" value="F:actin filament binding"/>
    <property type="evidence" value="ECO:0000314"/>
    <property type="project" value="UniProtKB"/>
</dbReference>
<dbReference type="GO" id="GO:0098632">
    <property type="term" value="F:cell-cell adhesion mediator activity"/>
    <property type="evidence" value="ECO:0000318"/>
    <property type="project" value="GO_Central"/>
</dbReference>
<dbReference type="GO" id="GO:0008307">
    <property type="term" value="F:structural constituent of muscle"/>
    <property type="evidence" value="ECO:0000315"/>
    <property type="project" value="UniProtKB"/>
</dbReference>
<dbReference type="GO" id="GO:0007411">
    <property type="term" value="P:axon guidance"/>
    <property type="evidence" value="ECO:0000318"/>
    <property type="project" value="GO_Central"/>
</dbReference>
<dbReference type="GO" id="GO:0070593">
    <property type="term" value="P:dendrite self-avoidance"/>
    <property type="evidence" value="ECO:0000318"/>
    <property type="project" value="GO_Central"/>
</dbReference>
<dbReference type="GO" id="GO:0007156">
    <property type="term" value="P:homophilic cell adhesion via plasma membrane adhesion molecules"/>
    <property type="evidence" value="ECO:0000318"/>
    <property type="project" value="GO_Central"/>
</dbReference>
<dbReference type="GO" id="GO:0030334">
    <property type="term" value="P:regulation of cell migration"/>
    <property type="evidence" value="ECO:0000314"/>
    <property type="project" value="UniProtKB"/>
</dbReference>
<dbReference type="GO" id="GO:0051493">
    <property type="term" value="P:regulation of cytoskeleton organization"/>
    <property type="evidence" value="ECO:0000270"/>
    <property type="project" value="UniProtKB"/>
</dbReference>
<dbReference type="FunFam" id="2.60.40.10:FF:000164">
    <property type="entry name" value="nexilin isoform X1"/>
    <property type="match status" value="1"/>
</dbReference>
<dbReference type="Gene3D" id="2.60.40.10">
    <property type="entry name" value="Immunoglobulins"/>
    <property type="match status" value="1"/>
</dbReference>
<dbReference type="InterPro" id="IPR007110">
    <property type="entry name" value="Ig-like_dom"/>
</dbReference>
<dbReference type="InterPro" id="IPR036179">
    <property type="entry name" value="Ig-like_dom_sf"/>
</dbReference>
<dbReference type="InterPro" id="IPR013783">
    <property type="entry name" value="Ig-like_fold"/>
</dbReference>
<dbReference type="InterPro" id="IPR013098">
    <property type="entry name" value="Ig_I-set"/>
</dbReference>
<dbReference type="InterPro" id="IPR003599">
    <property type="entry name" value="Ig_sub"/>
</dbReference>
<dbReference type="PANTHER" id="PTHR21508">
    <property type="entry name" value="MITOGUARDIN"/>
    <property type="match status" value="1"/>
</dbReference>
<dbReference type="PANTHER" id="PTHR21508:SF4">
    <property type="entry name" value="MITOGUARDIN 2"/>
    <property type="match status" value="1"/>
</dbReference>
<dbReference type="Pfam" id="PF07679">
    <property type="entry name" value="I-set"/>
    <property type="match status" value="1"/>
</dbReference>
<dbReference type="SMART" id="SM00409">
    <property type="entry name" value="IG"/>
    <property type="match status" value="1"/>
</dbReference>
<dbReference type="SUPFAM" id="SSF48726">
    <property type="entry name" value="Immunoglobulin"/>
    <property type="match status" value="1"/>
</dbReference>
<dbReference type="PROSITE" id="PS50835">
    <property type="entry name" value="IG_LIKE"/>
    <property type="match status" value="1"/>
</dbReference>
<evidence type="ECO:0000250" key="1">
    <source>
        <dbReference type="UniProtKB" id="Q7TPW1"/>
    </source>
</evidence>
<evidence type="ECO:0000250" key="2">
    <source>
        <dbReference type="UniProtKB" id="Q9Z2J4"/>
    </source>
</evidence>
<evidence type="ECO:0000255" key="3"/>
<evidence type="ECO:0000256" key="4">
    <source>
        <dbReference type="SAM" id="MobiDB-lite"/>
    </source>
</evidence>
<evidence type="ECO:0000269" key="5">
    <source>
    </source>
</evidence>
<evidence type="ECO:0000269" key="6">
    <source>
    </source>
</evidence>
<evidence type="ECO:0000269" key="7">
    <source>
    </source>
</evidence>
<evidence type="ECO:0000269" key="8">
    <source>
    </source>
</evidence>
<evidence type="ECO:0000269" key="9">
    <source>
    </source>
</evidence>
<evidence type="ECO:0000269" key="10">
    <source>
    </source>
</evidence>
<evidence type="ECO:0000269" key="11">
    <source>
    </source>
</evidence>
<evidence type="ECO:0000303" key="12">
    <source>
    </source>
</evidence>
<evidence type="ECO:0000303" key="13">
    <source>
    </source>
</evidence>
<evidence type="ECO:0000305" key="14"/>
<evidence type="ECO:0000312" key="15">
    <source>
        <dbReference type="EMBL" id="AAB28815.1"/>
    </source>
</evidence>
<evidence type="ECO:0000312" key="16">
    <source>
        <dbReference type="EMBL" id="AAD29607.1"/>
    </source>
</evidence>
<evidence type="ECO:0000312" key="17">
    <source>
        <dbReference type="EMBL" id="AAI11396.1"/>
    </source>
</evidence>
<evidence type="ECO:0000312" key="18">
    <source>
        <dbReference type="EMBL" id="AAI14446.1"/>
    </source>
</evidence>
<evidence type="ECO:0000312" key="19">
    <source>
        <dbReference type="EMBL" id="BAB71622.1"/>
    </source>
</evidence>
<evidence type="ECO:0000312" key="20">
    <source>
        <dbReference type="HGNC" id="HGNC:29557"/>
    </source>
</evidence>
<evidence type="ECO:0007744" key="21">
    <source>
    </source>
</evidence>
<evidence type="ECO:0007744" key="22">
    <source>
    </source>
</evidence>
<evidence type="ECO:0007744" key="23">
    <source>
    </source>
</evidence>
<evidence type="ECO:0007744" key="24">
    <source>
    </source>
</evidence>
<evidence type="ECO:0007744" key="25">
    <source>
    </source>
</evidence>
<evidence type="ECO:0007744" key="26">
    <source>
    </source>
</evidence>
<evidence type="ECO:0007744" key="27">
    <source>
    </source>
</evidence>
<evidence type="ECO:0007744" key="28">
    <source>
    </source>
</evidence>
<gene>
    <name evidence="20" type="primary">NEXN</name>
</gene>
<accession>Q0ZGT2</accession>
<accession>A0PJ84</accession>
<accession>B4DPZ7</accession>
<accession>Q0D2H2</accession>
<accession>Q14CC2</accession>
<accession>Q14CC3</accession>
<accession>Q16081</accession>
<accession>Q7Z2X0</accession>
<accession>Q96DL0</accession>
<accession>Q9Y2V1</accession>
<organism>
    <name type="scientific">Homo sapiens</name>
    <name type="common">Human</name>
    <dbReference type="NCBI Taxonomy" id="9606"/>
    <lineage>
        <taxon>Eukaryota</taxon>
        <taxon>Metazoa</taxon>
        <taxon>Chordata</taxon>
        <taxon>Craniata</taxon>
        <taxon>Vertebrata</taxon>
        <taxon>Euteleostomi</taxon>
        <taxon>Mammalia</taxon>
        <taxon>Eutheria</taxon>
        <taxon>Euarchontoglires</taxon>
        <taxon>Primates</taxon>
        <taxon>Haplorrhini</taxon>
        <taxon>Catarrhini</taxon>
        <taxon>Hominidae</taxon>
        <taxon>Homo</taxon>
    </lineage>
</organism>
<comment type="function">
    <text evidence="5 8 9">Involved in regulating cell migration through association with the actin cytoskeleton. Has an essential role in the maintenance of Z line and sarcomere integrity.</text>
</comment>
<comment type="subunit">
    <text evidence="8">Interacts with F-actin.</text>
</comment>
<comment type="interaction">
    <interactant intactId="EBI-10977819">
        <id>Q0ZGT2-4</id>
    </interactant>
    <interactant intactId="EBI-740459">
        <id>P51116</id>
        <label>FXR2</label>
    </interactant>
    <organismsDiffer>false</organismsDiffer>
    <experiments>3</experiments>
</comment>
<comment type="interaction">
    <interactant intactId="EBI-10977819">
        <id>Q0ZGT2-4</id>
    </interactant>
    <interactant intactId="EBI-10177272">
        <id>P15622-3</id>
        <label>ZNF250</label>
    </interactant>
    <organismsDiffer>false</organismsDiffer>
    <experiments>6</experiments>
</comment>
<comment type="interaction">
    <interactant intactId="EBI-10977819">
        <id>Q0ZGT2-4</id>
    </interactant>
    <interactant intactId="EBI-10178224">
        <id>P10073</id>
        <label>ZSCAN22</label>
    </interactant>
    <organismsDiffer>false</organismsDiffer>
    <experiments>3</experiments>
</comment>
<comment type="subcellular location">
    <subcellularLocation>
        <location evidence="2">Cytoplasm</location>
        <location evidence="2">Cytoskeleton</location>
    </subcellularLocation>
    <subcellularLocation>
        <location evidence="2">Cell junction</location>
        <location evidence="2">Adherens junction</location>
    </subcellularLocation>
    <subcellularLocation>
        <location evidence="2">Cytoplasm</location>
        <location evidence="2">Myofibril</location>
        <location evidence="2">Sarcomere</location>
        <location evidence="2">Z line</location>
    </subcellularLocation>
    <text evidence="2">Localizes to the cell-matrix AJ. Not found at the cell-cell AJ.</text>
</comment>
<comment type="alternative products">
    <event type="alternative splicing"/>
    <isoform>
        <id>Q0ZGT2-1</id>
        <name evidence="11">1</name>
        <sequence type="displayed"/>
    </isoform>
    <isoform>
        <id>Q0ZGT2-2</id>
        <name evidence="7">2</name>
        <sequence type="described" ref="VSP_052541 VSP_052543"/>
    </isoform>
    <isoform>
        <id>Q0ZGT2-3</id>
        <name evidence="6">3</name>
        <sequence type="described" ref="VSP_052542"/>
    </isoform>
    <isoform>
        <id>Q0ZGT2-4</id>
        <name>4</name>
        <sequence type="described" ref="VSP_043439"/>
    </isoform>
</comment>
<comment type="tissue specificity">
    <text evidence="5 8 9">Abundantly expressed in heart and skeletal muscle, and at lower levels in placenta, lung, liver and pancreas. Also expressed in HeLaS3 and MOLT-4 cell lines.</text>
</comment>
<comment type="disease" evidence="9">
    <disease id="DI-02530">
        <name>Cardiomyopathy, dilated, 1CC</name>
        <acronym>CMD1CC</acronym>
        <description>A disorder characterized by ventricular dilation and impaired systolic function, resulting in congestive heart failure and arrhythmia. Patients are at risk of premature death.</description>
        <dbReference type="MIM" id="613122"/>
    </disease>
    <text>The disease is caused by variants affecting the gene represented in this entry.</text>
</comment>
<comment type="disease" evidence="10">
    <disease id="DI-03041">
        <name>Cardiomyopathy, familial hypertrophic, 20</name>
        <acronym>CMH20</acronym>
        <description>A hereditary heart disorder characterized by ventricular hypertrophy, which is usually asymmetric and often involves the interventricular septum. The symptoms include dyspnea, syncope, collapse, palpitations, and chest pain. They can be readily provoked by exercise. The disorder has inter- and intrafamilial variability ranging from benign to malignant forms with high risk of cardiac failure and sudden cardiac death.</description>
        <dbReference type="MIM" id="613876"/>
    </disease>
    <text>The disease is caused by variants affecting the gene represented in this entry.</text>
</comment>
<comment type="sequence caution" evidence="14">
    <conflict type="miscellaneous discrepancy">
        <sequence resource="EMBL-CDS" id="AAH17827"/>
    </conflict>
    <text>Contaminating sequence. Potential poly-A sequence.</text>
</comment>
<comment type="sequence caution" evidence="14">
    <conflict type="erroneous initiation">
        <sequence resource="EMBL-CDS" id="AAH55084"/>
    </conflict>
    <text>Truncated N-terminus.</text>
</comment>
<comment type="sequence caution" evidence="14">
    <conflict type="miscellaneous discrepancy">
        <sequence resource="EMBL-CDS" id="AAH55084"/>
    </conflict>
    <text>Contaminating sequence. Potential poly-A sequence.</text>
</comment>
<comment type="sequence caution" evidence="14">
    <conflict type="erroneous initiation">
        <sequence resource="EMBL-CDS" id="AAI11396"/>
    </conflict>
    <text>Truncated N-terminus.</text>
</comment>
<comment type="sequence caution" evidence="14">
    <conflict type="erroneous initiation">
        <sequence resource="EMBL-CDS" id="AAI14445"/>
    </conflict>
    <text>Truncated N-terminus.</text>
</comment>
<comment type="sequence caution" evidence="14">
    <conflict type="erroneous initiation">
        <sequence resource="EMBL-CDS" id="AAI14446"/>
    </conflict>
    <text>Truncated N-terminus.</text>
</comment>
<comment type="sequence caution" evidence="14">
    <conflict type="erroneous initiation">
        <sequence resource="EMBL-CDS" id="BAB71622"/>
    </conflict>
    <text>Truncated N-terminus.</text>
</comment>
<keyword id="KW-0009">Actin-binding</keyword>
<keyword id="KW-0025">Alternative splicing</keyword>
<keyword id="KW-0122">Cardiomyopathy</keyword>
<keyword id="KW-0965">Cell junction</keyword>
<keyword id="KW-0963">Cytoplasm</keyword>
<keyword id="KW-0206">Cytoskeleton</keyword>
<keyword id="KW-0225">Disease variant</keyword>
<keyword id="KW-0393">Immunoglobulin domain</keyword>
<keyword id="KW-0597">Phosphoprotein</keyword>
<keyword id="KW-1267">Proteomics identification</keyword>
<keyword id="KW-1185">Reference proteome</keyword>
<protein>
    <recommendedName>
        <fullName>Nexilin</fullName>
    </recommendedName>
    <alternativeName>
        <fullName>F-actin-binding protein</fullName>
    </alternativeName>
    <alternativeName>
        <fullName>Nelin</fullName>
    </alternativeName>
</protein>
<proteinExistence type="evidence at protein level"/>
<name>NEXN_HUMAN</name>
<feature type="chain" id="PRO_0000302085" description="Nexilin">
    <location>
        <begin position="1"/>
        <end position="675"/>
    </location>
</feature>
<feature type="domain" description="Ig-like" evidence="3">
    <location>
        <begin position="582"/>
        <end position="670"/>
    </location>
</feature>
<feature type="region of interest" description="Disordered" evidence="4">
    <location>
        <begin position="1"/>
        <end position="66"/>
    </location>
</feature>
<feature type="region of interest" description="Disordered" evidence="4">
    <location>
        <begin position="105"/>
        <end position="127"/>
    </location>
</feature>
<feature type="region of interest" description="Disordered" evidence="4">
    <location>
        <begin position="254"/>
        <end position="278"/>
    </location>
</feature>
<feature type="region of interest" description="Disordered" evidence="4">
    <location>
        <begin position="313"/>
        <end position="336"/>
    </location>
</feature>
<feature type="region of interest" description="Disordered" evidence="4">
    <location>
        <begin position="487"/>
        <end position="513"/>
    </location>
</feature>
<feature type="region of interest" description="Disordered" evidence="4">
    <location>
        <begin position="551"/>
        <end position="584"/>
    </location>
</feature>
<feature type="compositionally biased region" description="Basic and acidic residues" evidence="4">
    <location>
        <begin position="27"/>
        <end position="66"/>
    </location>
</feature>
<feature type="modified residue" description="Phosphoserine" evidence="21 23 24 25 26 27 28">
    <location>
        <position position="80"/>
    </location>
</feature>
<feature type="modified residue" description="Phosphoserine" evidence="25">
    <location>
        <position position="241"/>
    </location>
</feature>
<feature type="modified residue" description="Phosphoserine" evidence="24 25">
    <location>
        <position position="357"/>
    </location>
</feature>
<feature type="modified residue" description="Phosphoserine" evidence="26 27">
    <location>
        <position position="365"/>
    </location>
</feature>
<feature type="modified residue" description="Phosphothreonine" evidence="22 25 28">
    <location>
        <position position="370"/>
    </location>
</feature>
<feature type="modified residue" description="Phosphoserine" evidence="1">
    <location>
        <position position="564"/>
    </location>
</feature>
<feature type="modified residue" description="Phosphoserine" evidence="2">
    <location>
        <position position="569"/>
    </location>
</feature>
<feature type="splice variant" id="VSP_043439" description="In isoform 4." evidence="12">
    <location>
        <begin position="9"/>
        <end position="72"/>
    </location>
</feature>
<feature type="splice variant" id="VSP_052541" description="In isoform 2." evidence="13">
    <location>
        <begin position="150"/>
        <end position="163"/>
    </location>
</feature>
<feature type="splice variant" id="VSP_052542" description="In isoform 3." evidence="12">
    <location>
        <begin position="237"/>
        <end position="298"/>
    </location>
</feature>
<feature type="splice variant" id="VSP_052543" description="In isoform 2." evidence="13">
    <original>SKN</original>
    <variation>TDDY</variation>
    <location>
        <begin position="673"/>
        <end position="675"/>
    </location>
</feature>
<feature type="sequence variant" id="VAR_065477" description="In CMH20; affects interaction with ACTA1 and F-actin; dbSNP:rs387907079." evidence="10">
    <original>Q</original>
    <variation>E</variation>
    <location>
        <position position="131"/>
    </location>
</feature>
<feature type="sequence variant" id="VAR_049963" description="In dbSNP:rs1166698." evidence="5 7 9">
    <original>G</original>
    <variation>R</variation>
    <location>
        <position position="245"/>
    </location>
</feature>
<feature type="sequence variant" id="VAR_065478" description="In CMH20; the mutant protein accumulates in the cytoplasm but binding to ACTA1 is not altered; dbSNP:rs146245480." evidence="10">
    <original>R</original>
    <variation>C</variation>
    <location>
        <position position="279"/>
    </location>
</feature>
<feature type="sequence variant" id="VAR_059414" description="In dbSNP:rs9660322.">
    <original>R</original>
    <variation>K</variation>
    <location>
        <position position="335"/>
    </location>
</feature>
<feature type="sequence variant" id="VAR_063009" description="In CMD1CC; affects cardiac Z line integrity; no effect on protein expression and stability; dbSNP:rs137853198." evidence="9">
    <original>P</original>
    <variation>T</variation>
    <location>
        <position position="611"/>
    </location>
</feature>
<feature type="sequence variant" id="VAR_063010" description="In CMD1CC; affects cardiac Z-disk integrity; no effect on protein expression and stability." evidence="9">
    <location>
        <position position="650"/>
    </location>
</feature>
<feature type="sequence variant" id="VAR_063011" description="In CMD1CC; affects cardiac Z line integrity; no effect on protein expression and stability; dbSNP:rs137853197." evidence="9">
    <original>Y</original>
    <variation>C</variation>
    <location>
        <position position="652"/>
    </location>
</feature>
<feature type="sequence conflict" description="In Ref. 4; AAD29607." evidence="14" ref="4">
    <original>YVPKLTGT</original>
    <variation>NLPFTVP</variation>
    <location>
        <begin position="94"/>
        <end position="101"/>
    </location>
</feature>
<feature type="sequence conflict" description="In Ref. 5; AAI14446." evidence="14" ref="5">
    <original>K</original>
    <variation>E</variation>
    <location>
        <position position="328"/>
    </location>
</feature>
<feature type="sequence conflict" description="In Ref. 4; AAD29607." evidence="14" ref="4">
    <original>R</original>
    <variation>K</variation>
    <location>
        <position position="429"/>
    </location>
</feature>
<feature type="sequence conflict" description="In Ref. 5; AAH17827." evidence="14" ref="5">
    <original>L</original>
    <variation>Q</variation>
    <location>
        <position position="448"/>
    </location>
</feature>
<feature type="sequence conflict" description="In Ref. 2; BAB71622." evidence="14" ref="2">
    <original>A</original>
    <variation>T</variation>
    <location>
        <position position="476"/>
    </location>
</feature>
<feature type="sequence conflict" description="In Ref. 2; BAB71622." evidence="14" ref="2">
    <original>Y</original>
    <variation>H</variation>
    <location>
        <position position="637"/>
    </location>
</feature>
<feature type="modified residue" description="Phosphoserine" evidence="21 24">
    <location sequence="Q0ZGT2-4">
        <position position="16"/>
    </location>
</feature>
<reference key="1">
    <citation type="journal article" date="2009" name="Nat. Med.">
        <title>Nexilin mutations destabilize cardiac Z-disks and lead to dilated cardiomyopathy.</title>
        <authorList>
            <person name="Hassel D."/>
            <person name="Dahme T."/>
            <person name="Erdmann J."/>
            <person name="Meder B."/>
            <person name="Huge A."/>
            <person name="Stoll M."/>
            <person name="Just S."/>
            <person name="Hess A."/>
            <person name="Ehlermann P."/>
            <person name="Weichenhan D."/>
            <person name="Grimmler M."/>
            <person name="Liptau H."/>
            <person name="Hetzer R."/>
            <person name="Regitz-Zagrosek V."/>
            <person name="Fischer C."/>
            <person name="Nurnberg P."/>
            <person name="Schunkert H."/>
            <person name="Katus H.A."/>
            <person name="Rottbauer W."/>
        </authorList>
    </citation>
    <scope>NUCLEOTIDE SEQUENCE [MRNA] (ISOFORM 1)</scope>
    <scope>FUNCTION</scope>
    <scope>TISSUE SPECIFICITY</scope>
    <scope>VARIANTS CMD1CC THR-611; GLY-650 DEL AND CYS-652</scope>
    <scope>VARIANT ARG-245</scope>
    <scope>CHARACTERIZATION OF VARIANTS CMD1CC THR-611; GLY-650 DEL AND CYS-652</scope>
</reference>
<reference evidence="14 19" key="2">
    <citation type="journal article" date="2004" name="Nat. Genet.">
        <title>Complete sequencing and characterization of 21,243 full-length human cDNAs.</title>
        <authorList>
            <person name="Ota T."/>
            <person name="Suzuki Y."/>
            <person name="Nishikawa T."/>
            <person name="Otsuki T."/>
            <person name="Sugiyama T."/>
            <person name="Irie R."/>
            <person name="Wakamatsu A."/>
            <person name="Hayashi K."/>
            <person name="Sato H."/>
            <person name="Nagai K."/>
            <person name="Kimura K."/>
            <person name="Makita H."/>
            <person name="Sekine M."/>
            <person name="Obayashi M."/>
            <person name="Nishi T."/>
            <person name="Shibahara T."/>
            <person name="Tanaka T."/>
            <person name="Ishii S."/>
            <person name="Yamamoto J."/>
            <person name="Saito K."/>
            <person name="Kawai Y."/>
            <person name="Isono Y."/>
            <person name="Nakamura Y."/>
            <person name="Nagahari K."/>
            <person name="Murakami K."/>
            <person name="Yasuda T."/>
            <person name="Iwayanagi T."/>
            <person name="Wagatsuma M."/>
            <person name="Shiratori A."/>
            <person name="Sudo H."/>
            <person name="Hosoiri T."/>
            <person name="Kaku Y."/>
            <person name="Kodaira H."/>
            <person name="Kondo H."/>
            <person name="Sugawara M."/>
            <person name="Takahashi M."/>
            <person name="Kanda K."/>
            <person name="Yokoi T."/>
            <person name="Furuya T."/>
            <person name="Kikkawa E."/>
            <person name="Omura Y."/>
            <person name="Abe K."/>
            <person name="Kamihara K."/>
            <person name="Katsuta N."/>
            <person name="Sato K."/>
            <person name="Tanikawa M."/>
            <person name="Yamazaki M."/>
            <person name="Ninomiya K."/>
            <person name="Ishibashi T."/>
            <person name="Yamashita H."/>
            <person name="Murakawa K."/>
            <person name="Fujimori K."/>
            <person name="Tanai H."/>
            <person name="Kimata M."/>
            <person name="Watanabe M."/>
            <person name="Hiraoka S."/>
            <person name="Chiba Y."/>
            <person name="Ishida S."/>
            <person name="Ono Y."/>
            <person name="Takiguchi S."/>
            <person name="Watanabe S."/>
            <person name="Yosida M."/>
            <person name="Hotuta T."/>
            <person name="Kusano J."/>
            <person name="Kanehori K."/>
            <person name="Takahashi-Fujii A."/>
            <person name="Hara H."/>
            <person name="Tanase T.-O."/>
            <person name="Nomura Y."/>
            <person name="Togiya S."/>
            <person name="Komai F."/>
            <person name="Hara R."/>
            <person name="Takeuchi K."/>
            <person name="Arita M."/>
            <person name="Imose N."/>
            <person name="Musashino K."/>
            <person name="Yuuki H."/>
            <person name="Oshima A."/>
            <person name="Sasaki N."/>
            <person name="Aotsuka S."/>
            <person name="Yoshikawa Y."/>
            <person name="Matsunawa H."/>
            <person name="Ichihara T."/>
            <person name="Shiohata N."/>
            <person name="Sano S."/>
            <person name="Moriya S."/>
            <person name="Momiyama H."/>
            <person name="Satoh N."/>
            <person name="Takami S."/>
            <person name="Terashima Y."/>
            <person name="Suzuki O."/>
            <person name="Nakagawa S."/>
            <person name="Senoh A."/>
            <person name="Mizoguchi H."/>
            <person name="Goto Y."/>
            <person name="Shimizu F."/>
            <person name="Wakebe H."/>
            <person name="Hishigaki H."/>
            <person name="Watanabe T."/>
            <person name="Sugiyama A."/>
            <person name="Takemoto M."/>
            <person name="Kawakami B."/>
            <person name="Yamazaki M."/>
            <person name="Watanabe K."/>
            <person name="Kumagai A."/>
            <person name="Itakura S."/>
            <person name="Fukuzumi Y."/>
            <person name="Fujimori Y."/>
            <person name="Komiyama M."/>
            <person name="Tashiro H."/>
            <person name="Tanigami A."/>
            <person name="Fujiwara T."/>
            <person name="Ono T."/>
            <person name="Yamada K."/>
            <person name="Fujii Y."/>
            <person name="Ozaki K."/>
            <person name="Hirao M."/>
            <person name="Ohmori Y."/>
            <person name="Kawabata A."/>
            <person name="Hikiji T."/>
            <person name="Kobatake N."/>
            <person name="Inagaki H."/>
            <person name="Ikema Y."/>
            <person name="Okamoto S."/>
            <person name="Okitani R."/>
            <person name="Kawakami T."/>
            <person name="Noguchi S."/>
            <person name="Itoh T."/>
            <person name="Shigeta K."/>
            <person name="Senba T."/>
            <person name="Matsumura K."/>
            <person name="Nakajima Y."/>
            <person name="Mizuno T."/>
            <person name="Morinaga M."/>
            <person name="Sasaki M."/>
            <person name="Togashi T."/>
            <person name="Oyama M."/>
            <person name="Hata H."/>
            <person name="Watanabe M."/>
            <person name="Komatsu T."/>
            <person name="Mizushima-Sugano J."/>
            <person name="Satoh T."/>
            <person name="Shirai Y."/>
            <person name="Takahashi Y."/>
            <person name="Nakagawa K."/>
            <person name="Okumura K."/>
            <person name="Nagase T."/>
            <person name="Nomura N."/>
            <person name="Kikuchi H."/>
            <person name="Masuho Y."/>
            <person name="Yamashita R."/>
            <person name="Nakai K."/>
            <person name="Yada T."/>
            <person name="Nakamura Y."/>
            <person name="Ohara O."/>
            <person name="Isogai T."/>
            <person name="Sugano S."/>
        </authorList>
    </citation>
    <scope>NUCLEOTIDE SEQUENCE [LARGE SCALE MRNA] (ISOFORM 4)</scope>
    <scope>NUCLEOTIDE SEQUENCE [LARGE SCALE MRNA] OF 100-675 (ISOFORM 3)</scope>
    <source>
        <tissue evidence="19">Gastric mucosa</tissue>
    </source>
</reference>
<reference key="3">
    <citation type="journal article" date="2006" name="Nature">
        <title>The DNA sequence and biological annotation of human chromosome 1.</title>
        <authorList>
            <person name="Gregory S.G."/>
            <person name="Barlow K.F."/>
            <person name="McLay K.E."/>
            <person name="Kaul R."/>
            <person name="Swarbreck D."/>
            <person name="Dunham A."/>
            <person name="Scott C.E."/>
            <person name="Howe K.L."/>
            <person name="Woodfine K."/>
            <person name="Spencer C.C.A."/>
            <person name="Jones M.C."/>
            <person name="Gillson C."/>
            <person name="Searle S."/>
            <person name="Zhou Y."/>
            <person name="Kokocinski F."/>
            <person name="McDonald L."/>
            <person name="Evans R."/>
            <person name="Phillips K."/>
            <person name="Atkinson A."/>
            <person name="Cooper R."/>
            <person name="Jones C."/>
            <person name="Hall R.E."/>
            <person name="Andrews T.D."/>
            <person name="Lloyd C."/>
            <person name="Ainscough R."/>
            <person name="Almeida J.P."/>
            <person name="Ambrose K.D."/>
            <person name="Anderson F."/>
            <person name="Andrew R.W."/>
            <person name="Ashwell R.I.S."/>
            <person name="Aubin K."/>
            <person name="Babbage A.K."/>
            <person name="Bagguley C.L."/>
            <person name="Bailey J."/>
            <person name="Beasley H."/>
            <person name="Bethel G."/>
            <person name="Bird C.P."/>
            <person name="Bray-Allen S."/>
            <person name="Brown J.Y."/>
            <person name="Brown A.J."/>
            <person name="Buckley D."/>
            <person name="Burton J."/>
            <person name="Bye J."/>
            <person name="Carder C."/>
            <person name="Chapman J.C."/>
            <person name="Clark S.Y."/>
            <person name="Clarke G."/>
            <person name="Clee C."/>
            <person name="Cobley V."/>
            <person name="Collier R.E."/>
            <person name="Corby N."/>
            <person name="Coville G.J."/>
            <person name="Davies J."/>
            <person name="Deadman R."/>
            <person name="Dunn M."/>
            <person name="Earthrowl M."/>
            <person name="Ellington A.G."/>
            <person name="Errington H."/>
            <person name="Frankish A."/>
            <person name="Frankland J."/>
            <person name="French L."/>
            <person name="Garner P."/>
            <person name="Garnett J."/>
            <person name="Gay L."/>
            <person name="Ghori M.R.J."/>
            <person name="Gibson R."/>
            <person name="Gilby L.M."/>
            <person name="Gillett W."/>
            <person name="Glithero R.J."/>
            <person name="Grafham D.V."/>
            <person name="Griffiths C."/>
            <person name="Griffiths-Jones S."/>
            <person name="Grocock R."/>
            <person name="Hammond S."/>
            <person name="Harrison E.S.I."/>
            <person name="Hart E."/>
            <person name="Haugen E."/>
            <person name="Heath P.D."/>
            <person name="Holmes S."/>
            <person name="Holt K."/>
            <person name="Howden P.J."/>
            <person name="Hunt A.R."/>
            <person name="Hunt S.E."/>
            <person name="Hunter G."/>
            <person name="Isherwood J."/>
            <person name="James R."/>
            <person name="Johnson C."/>
            <person name="Johnson D."/>
            <person name="Joy A."/>
            <person name="Kay M."/>
            <person name="Kershaw J.K."/>
            <person name="Kibukawa M."/>
            <person name="Kimberley A.M."/>
            <person name="King A."/>
            <person name="Knights A.J."/>
            <person name="Lad H."/>
            <person name="Laird G."/>
            <person name="Lawlor S."/>
            <person name="Leongamornlert D.A."/>
            <person name="Lloyd D.M."/>
            <person name="Loveland J."/>
            <person name="Lovell J."/>
            <person name="Lush M.J."/>
            <person name="Lyne R."/>
            <person name="Martin S."/>
            <person name="Mashreghi-Mohammadi M."/>
            <person name="Matthews L."/>
            <person name="Matthews N.S.W."/>
            <person name="McLaren S."/>
            <person name="Milne S."/>
            <person name="Mistry S."/>
            <person name="Moore M.J.F."/>
            <person name="Nickerson T."/>
            <person name="O'Dell C.N."/>
            <person name="Oliver K."/>
            <person name="Palmeiri A."/>
            <person name="Palmer S.A."/>
            <person name="Parker A."/>
            <person name="Patel D."/>
            <person name="Pearce A.V."/>
            <person name="Peck A.I."/>
            <person name="Pelan S."/>
            <person name="Phelps K."/>
            <person name="Phillimore B.J."/>
            <person name="Plumb R."/>
            <person name="Rajan J."/>
            <person name="Raymond C."/>
            <person name="Rouse G."/>
            <person name="Saenphimmachak C."/>
            <person name="Sehra H.K."/>
            <person name="Sheridan E."/>
            <person name="Shownkeen R."/>
            <person name="Sims S."/>
            <person name="Skuce C.D."/>
            <person name="Smith M."/>
            <person name="Steward C."/>
            <person name="Subramanian S."/>
            <person name="Sycamore N."/>
            <person name="Tracey A."/>
            <person name="Tromans A."/>
            <person name="Van Helmond Z."/>
            <person name="Wall M."/>
            <person name="Wallis J.M."/>
            <person name="White S."/>
            <person name="Whitehead S.L."/>
            <person name="Wilkinson J.E."/>
            <person name="Willey D.L."/>
            <person name="Williams H."/>
            <person name="Wilming L."/>
            <person name="Wray P.W."/>
            <person name="Wu Z."/>
            <person name="Coulson A."/>
            <person name="Vaudin M."/>
            <person name="Sulston J.E."/>
            <person name="Durbin R.M."/>
            <person name="Hubbard T."/>
            <person name="Wooster R."/>
            <person name="Dunham I."/>
            <person name="Carter N.P."/>
            <person name="McVean G."/>
            <person name="Ross M.T."/>
            <person name="Harrow J."/>
            <person name="Olson M.V."/>
            <person name="Beck S."/>
            <person name="Rogers J."/>
            <person name="Bentley D.R."/>
        </authorList>
    </citation>
    <scope>NUCLEOTIDE SEQUENCE [LARGE SCALE GENOMIC DNA]</scope>
</reference>
<reference evidence="14 18" key="4">
    <citation type="journal article" date="2004" name="Genome Res.">
        <title>The status, quality, and expansion of the NIH full-length cDNA project: the Mammalian Gene Collection (MGC).</title>
        <authorList>
            <consortium name="The MGC Project Team"/>
        </authorList>
    </citation>
    <scope>NUCLEOTIDE SEQUENCE [LARGE SCALE MRNA] (ISOFORM 2)</scope>
    <scope>NUCLEOTIDE SEQUENCE [LARGE SCALE MRNA] OF 100-675 (ISOFORM 1)</scope>
    <scope>VARIANT ARG-245</scope>
    <source>
        <tissue evidence="17">Skeletal muscle</tissue>
    </source>
</reference>
<reference evidence="14 16" key="5">
    <citation type="journal article" date="2001" name="Sheng Wu Hua Xue Yu Sheng Wu Wu Li Xue Bao">
        <title>Molecular cloning of NELIN, a putative human cytoskeleton regulation gene.</title>
        <authorList>
            <person name="Zhao Y."/>
            <person name="Wei Y.-J."/>
            <person name="Cao H.-Q."/>
            <person name="Ding J.-F."/>
        </authorList>
    </citation>
    <scope>NUCLEOTIDE SEQUENCE [MRNA] OF 91-675 (ISOFORM 1)</scope>
    <scope>FUNCTION</scope>
    <scope>TISSUE SPECIFICITY</scope>
    <scope>VARIANT ARG-245</scope>
    <source>
        <tissue evidence="16">Heart</tissue>
    </source>
</reference>
<reference evidence="14 15" key="6">
    <citation type="journal article" date="1993" name="J. Endocrinol. Invest.">
        <title>Muscle autoantigens in thyroid associated ophthalmopathy: the limits of molecular genetics.</title>
        <authorList>
            <person name="Elisei R."/>
            <person name="Weightman D."/>
            <person name="Kendall-Taylor P."/>
            <person name="Vassart G."/>
            <person name="Ludgate M."/>
        </authorList>
    </citation>
    <scope>NUCLEOTIDE SEQUENCE [MRNA] OF 108-454 (ISOFORM 1)</scope>
</reference>
<reference evidence="14" key="7">
    <citation type="journal article" date="2005" name="Biochem. Biophys. Res. Commun.">
        <title>NELIN, a new F-actin associated protein, stimulates HeLa cell migration and adhesion.</title>
        <authorList>
            <person name="Wang W."/>
            <person name="Zhang W."/>
            <person name="Han Y."/>
            <person name="Chen J."/>
            <person name="Wang Y."/>
            <person name="Zhang Z."/>
            <person name="Hui R."/>
        </authorList>
    </citation>
    <scope>FUNCTION</scope>
    <scope>INTERACTION WITH F-ACTIN</scope>
    <scope>SUBCELLULAR LOCATION</scope>
    <scope>TISSUE SPECIFICITY</scope>
</reference>
<reference key="8">
    <citation type="journal article" date="2006" name="Cell">
        <title>Global, in vivo, and site-specific phosphorylation dynamics in signaling networks.</title>
        <authorList>
            <person name="Olsen J.V."/>
            <person name="Blagoev B."/>
            <person name="Gnad F."/>
            <person name="Macek B."/>
            <person name="Kumar C."/>
            <person name="Mortensen P."/>
            <person name="Mann M."/>
        </authorList>
    </citation>
    <scope>PHOSPHORYLATION [LARGE SCALE ANALYSIS] AT SER-80</scope>
    <scope>PHOSPHORYLATION [LARGE SCALE ANALYSIS] AT SER-16 (ISOFORM 4)</scope>
    <scope>IDENTIFICATION BY MASS SPECTROMETRY [LARGE SCALE ANALYSIS]</scope>
    <source>
        <tissue>Cervix carcinoma</tissue>
    </source>
</reference>
<reference key="9">
    <citation type="journal article" date="2007" name="J. Proteome Res.">
        <title>Improved titanium dioxide enrichment of phosphopeptides from HeLa cells and high confident phosphopeptide identification by cross-validation of MS/MS and MS/MS/MS spectra.</title>
        <authorList>
            <person name="Yu L.R."/>
            <person name="Zhu Z."/>
            <person name="Chan K.C."/>
            <person name="Issaq H.J."/>
            <person name="Dimitrov D.S."/>
            <person name="Veenstra T.D."/>
        </authorList>
    </citation>
    <scope>PHOSPHORYLATION [LARGE SCALE ANALYSIS] AT THR-370</scope>
    <scope>IDENTIFICATION BY MASS SPECTROMETRY [LARGE SCALE ANALYSIS]</scope>
    <source>
        <tissue>Cervix carcinoma</tissue>
    </source>
</reference>
<reference key="10">
    <citation type="journal article" date="2008" name="Proc. Natl. Acad. Sci. U.S.A.">
        <title>A quantitative atlas of mitotic phosphorylation.</title>
        <authorList>
            <person name="Dephoure N."/>
            <person name="Zhou C."/>
            <person name="Villen J."/>
            <person name="Beausoleil S.A."/>
            <person name="Bakalarski C.E."/>
            <person name="Elledge S.J."/>
            <person name="Gygi S.P."/>
        </authorList>
    </citation>
    <scope>PHOSPHORYLATION [LARGE SCALE ANALYSIS] AT SER-80 AND SER-357</scope>
    <scope>PHOSPHORYLATION [LARGE SCALE ANALYSIS] AT SER-16 (ISOFORM 4)</scope>
    <scope>IDENTIFICATION BY MASS SPECTROMETRY [LARGE SCALE ANALYSIS]</scope>
    <source>
        <tissue>Cervix carcinoma</tissue>
    </source>
</reference>
<reference key="11">
    <citation type="journal article" date="2008" name="Proteomics">
        <title>Large-scale phosphoproteome analysis of human liver tissue by enrichment and fractionation of phosphopeptides with strong anion exchange chromatography.</title>
        <authorList>
            <person name="Han G."/>
            <person name="Ye M."/>
            <person name="Zhou H."/>
            <person name="Jiang X."/>
            <person name="Feng S."/>
            <person name="Jiang X."/>
            <person name="Tian R."/>
            <person name="Wan D."/>
            <person name="Zou H."/>
            <person name="Gu J."/>
        </authorList>
    </citation>
    <scope>PHOSPHORYLATION [LARGE SCALE ANALYSIS] AT SER-80</scope>
    <scope>IDENTIFICATION BY MASS SPECTROMETRY [LARGE SCALE ANALYSIS]</scope>
    <source>
        <tissue>Liver</tissue>
    </source>
</reference>
<reference key="12">
    <citation type="journal article" date="2010" name="Sci. Signal.">
        <title>Quantitative phosphoproteomics reveals widespread full phosphorylation site occupancy during mitosis.</title>
        <authorList>
            <person name="Olsen J.V."/>
            <person name="Vermeulen M."/>
            <person name="Santamaria A."/>
            <person name="Kumar C."/>
            <person name="Miller M.L."/>
            <person name="Jensen L.J."/>
            <person name="Gnad F."/>
            <person name="Cox J."/>
            <person name="Jensen T.S."/>
            <person name="Nigg E.A."/>
            <person name="Brunak S."/>
            <person name="Mann M."/>
        </authorList>
    </citation>
    <scope>PHOSPHORYLATION [LARGE SCALE ANALYSIS] AT SER-80; SER-241; SER-357 AND THR-370</scope>
    <scope>IDENTIFICATION BY MASS SPECTROMETRY [LARGE SCALE ANALYSIS]</scope>
    <source>
        <tissue>Cervix carcinoma</tissue>
    </source>
</reference>
<reference key="13">
    <citation type="journal article" date="2011" name="Sci. Signal.">
        <title>System-wide temporal characterization of the proteome and phosphoproteome of human embryonic stem cell differentiation.</title>
        <authorList>
            <person name="Rigbolt K.T."/>
            <person name="Prokhorova T.A."/>
            <person name="Akimov V."/>
            <person name="Henningsen J."/>
            <person name="Johansen P.T."/>
            <person name="Kratchmarova I."/>
            <person name="Kassem M."/>
            <person name="Mann M."/>
            <person name="Olsen J.V."/>
            <person name="Blagoev B."/>
        </authorList>
    </citation>
    <scope>PHOSPHORYLATION [LARGE SCALE ANALYSIS] AT SER-80 AND SER-365</scope>
    <scope>IDENTIFICATION BY MASS SPECTROMETRY [LARGE SCALE ANALYSIS]</scope>
</reference>
<reference key="14">
    <citation type="journal article" date="2013" name="J. Proteome Res.">
        <title>Toward a comprehensive characterization of a human cancer cell phosphoproteome.</title>
        <authorList>
            <person name="Zhou H."/>
            <person name="Di Palma S."/>
            <person name="Preisinger C."/>
            <person name="Peng M."/>
            <person name="Polat A.N."/>
            <person name="Heck A.J."/>
            <person name="Mohammed S."/>
        </authorList>
    </citation>
    <scope>PHOSPHORYLATION [LARGE SCALE ANALYSIS] AT SER-80 AND SER-365</scope>
    <scope>IDENTIFICATION BY MASS SPECTROMETRY [LARGE SCALE ANALYSIS]</scope>
    <source>
        <tissue>Erythroleukemia</tissue>
    </source>
</reference>
<reference key="15">
    <citation type="journal article" date="2014" name="J. Proteomics">
        <title>An enzyme assisted RP-RPLC approach for in-depth analysis of human liver phosphoproteome.</title>
        <authorList>
            <person name="Bian Y."/>
            <person name="Song C."/>
            <person name="Cheng K."/>
            <person name="Dong M."/>
            <person name="Wang F."/>
            <person name="Huang J."/>
            <person name="Sun D."/>
            <person name="Wang L."/>
            <person name="Ye M."/>
            <person name="Zou H."/>
        </authorList>
    </citation>
    <scope>PHOSPHORYLATION [LARGE SCALE ANALYSIS] AT SER-80 AND THR-370</scope>
    <scope>IDENTIFICATION BY MASS SPECTROMETRY [LARGE SCALE ANALYSIS]</scope>
    <source>
        <tissue>Liver</tissue>
    </source>
</reference>
<reference key="16">
    <citation type="journal article" date="2010" name="Am. J. Hum. Genet.">
        <title>Mutations in NEXN, a Z-disc gene, are associated with hypertrophic cardiomyopathy.</title>
        <authorList>
            <person name="Wang H."/>
            <person name="Li Z."/>
            <person name="Wang J."/>
            <person name="Sun K."/>
            <person name="Cui Q."/>
            <person name="Song L."/>
            <person name="Zou Y."/>
            <person name="Wang X."/>
            <person name="Liu X."/>
            <person name="Hui R."/>
            <person name="Fan Y."/>
        </authorList>
    </citation>
    <scope>VARIANTS CMH20 GLU-131 AND CYS-279</scope>
    <scope>CHARACTERIZATION OF VARIANTS CMH20 GLU-131 AND CYS-279</scope>
</reference>
<sequence>MNDISQKAEILLSSSKPVPKTYVPKLGKGDVKDKFEAMQRAREERNQRRSRDEKQRRKEQYIREREWNRRKQEIKEMLASDDEEDVSSKVEKAYVPKLTGTVKGRFAEMEKQRQEEQRKRTEEERKRRIEQDMLEKRKIQRELAKRAEQIEDINNTGTESASEEGDDSLLITVVPVKSYKTSGKMKKNFEDLEKEREEKERIKYEEDKRIRYEEQRPSLKEAKCLSLVMDDEIESEAKKESLSPGKLKLTFEELERQRQENRKKQAEEEARKRLEEEKRAFEEARRQMVNEDEENQDTAKIFKGYRPGKLKLSFEEMERQRREDEKRKAEEEARRRIEEEKKAFAEARRNMVVDDDSPEMYKTISQEFLTPGKLEINFEELLKQKMEEEKRRTEEERKHKLEMEKQEFEQLRQEMGEEEEENETFGLSREYEELIKLKRSGSIQAKNLKSKFEKIGQLSEKEIQKKIEEERARRRAIDLEIKEREAENFHEEDDVDVRPARKSEAPFTHKVNMKARFEQMAKAREEEEQRRIEEQKLLRMQFEQREIDAALQKKREEEEEEEGSIMNGSTAEDEEQTRSGAPWFKKPLKNTSVVDSEPVRFTVKVTGEPKPEITWWFEGEILQDGEDYQYIERGETYCLYLPETFPEDGGEYMCKAVNNKGSAASTCILTIESKN</sequence>